<keyword id="KW-0004">4Fe-4S</keyword>
<keyword id="KW-0997">Cell inner membrane</keyword>
<keyword id="KW-1003">Cell membrane</keyword>
<keyword id="KW-0249">Electron transport</keyword>
<keyword id="KW-0408">Iron</keyword>
<keyword id="KW-0411">Iron-sulfur</keyword>
<keyword id="KW-0472">Membrane</keyword>
<keyword id="KW-0479">Metal-binding</keyword>
<keyword id="KW-0677">Repeat</keyword>
<keyword id="KW-1278">Translocase</keyword>
<keyword id="KW-0813">Transport</keyword>
<evidence type="ECO:0000255" key="1">
    <source>
        <dbReference type="HAMAP-Rule" id="MF_00463"/>
    </source>
</evidence>
<organism>
    <name type="scientific">Shewanella sp. (strain MR-7)</name>
    <dbReference type="NCBI Taxonomy" id="60481"/>
    <lineage>
        <taxon>Bacteria</taxon>
        <taxon>Pseudomonadati</taxon>
        <taxon>Pseudomonadota</taxon>
        <taxon>Gammaproteobacteria</taxon>
        <taxon>Alteromonadales</taxon>
        <taxon>Shewanellaceae</taxon>
        <taxon>Shewanella</taxon>
    </lineage>
</organism>
<accession>Q0HVF6</accession>
<feature type="chain" id="PRO_1000013657" description="Ion-translocating oxidoreductase complex subunit B">
    <location>
        <begin position="1"/>
        <end position="193"/>
    </location>
</feature>
<feature type="domain" description="4Fe-4S" evidence="1">
    <location>
        <begin position="32"/>
        <end position="90"/>
    </location>
</feature>
<feature type="domain" description="4Fe-4S ferredoxin-type 1" evidence="1">
    <location>
        <begin position="105"/>
        <end position="134"/>
    </location>
</feature>
<feature type="domain" description="4Fe-4S ferredoxin-type 2" evidence="1">
    <location>
        <begin position="136"/>
        <end position="164"/>
    </location>
</feature>
<feature type="region of interest" description="Hydrophobic" evidence="1">
    <location>
        <begin position="1"/>
        <end position="26"/>
    </location>
</feature>
<feature type="binding site" evidence="1">
    <location>
        <position position="49"/>
    </location>
    <ligand>
        <name>[4Fe-4S] cluster</name>
        <dbReference type="ChEBI" id="CHEBI:49883"/>
        <label>1</label>
    </ligand>
</feature>
<feature type="binding site" evidence="1">
    <location>
        <position position="52"/>
    </location>
    <ligand>
        <name>[4Fe-4S] cluster</name>
        <dbReference type="ChEBI" id="CHEBI:49883"/>
        <label>1</label>
    </ligand>
</feature>
<feature type="binding site" evidence="1">
    <location>
        <position position="57"/>
    </location>
    <ligand>
        <name>[4Fe-4S] cluster</name>
        <dbReference type="ChEBI" id="CHEBI:49883"/>
        <label>1</label>
    </ligand>
</feature>
<feature type="binding site" evidence="1">
    <location>
        <position position="73"/>
    </location>
    <ligand>
        <name>[4Fe-4S] cluster</name>
        <dbReference type="ChEBI" id="CHEBI:49883"/>
        <label>1</label>
    </ligand>
</feature>
<feature type="binding site" evidence="1">
    <location>
        <position position="114"/>
    </location>
    <ligand>
        <name>[4Fe-4S] cluster</name>
        <dbReference type="ChEBI" id="CHEBI:49883"/>
        <label>2</label>
    </ligand>
</feature>
<feature type="binding site" evidence="1">
    <location>
        <position position="117"/>
    </location>
    <ligand>
        <name>[4Fe-4S] cluster</name>
        <dbReference type="ChEBI" id="CHEBI:49883"/>
        <label>2</label>
    </ligand>
</feature>
<feature type="binding site" evidence="1">
    <location>
        <position position="120"/>
    </location>
    <ligand>
        <name>[4Fe-4S] cluster</name>
        <dbReference type="ChEBI" id="CHEBI:49883"/>
        <label>2</label>
    </ligand>
</feature>
<feature type="binding site" evidence="1">
    <location>
        <position position="124"/>
    </location>
    <ligand>
        <name>[4Fe-4S] cluster</name>
        <dbReference type="ChEBI" id="CHEBI:49883"/>
        <label>3</label>
    </ligand>
</feature>
<feature type="binding site" evidence="1">
    <location>
        <position position="144"/>
    </location>
    <ligand>
        <name>[4Fe-4S] cluster</name>
        <dbReference type="ChEBI" id="CHEBI:49883"/>
        <label>3</label>
    </ligand>
</feature>
<feature type="binding site" evidence="1">
    <location>
        <position position="147"/>
    </location>
    <ligand>
        <name>[4Fe-4S] cluster</name>
        <dbReference type="ChEBI" id="CHEBI:49883"/>
        <label>3</label>
    </ligand>
</feature>
<feature type="binding site" evidence="1">
    <location>
        <position position="150"/>
    </location>
    <ligand>
        <name>[4Fe-4S] cluster</name>
        <dbReference type="ChEBI" id="CHEBI:49883"/>
        <label>3</label>
    </ligand>
</feature>
<feature type="binding site" evidence="1">
    <location>
        <position position="154"/>
    </location>
    <ligand>
        <name>[4Fe-4S] cluster</name>
        <dbReference type="ChEBI" id="CHEBI:49883"/>
        <label>2</label>
    </ligand>
</feature>
<protein>
    <recommendedName>
        <fullName evidence="1">Ion-translocating oxidoreductase complex subunit B</fullName>
        <ecNumber evidence="1">7.-.-.-</ecNumber>
    </recommendedName>
    <alternativeName>
        <fullName evidence="1">Rnf electron transport complex subunit B</fullName>
    </alternativeName>
</protein>
<proteinExistence type="inferred from homology"/>
<name>RNFB_SHESR</name>
<sequence>MSTMLIAVILLTLLALFFGVLLGFAALKFKVEGNPIVDELEAILPQTQCGQCGYPGCRPYAEAIANGDKVNKCPPGGTATMEKLASLMGVEPEPLNAEAQSQVKKVAYIREDECIGCTKCIQACPVDAIIGAGKLMHTVLTADCTGCDLCVEPCPVDCIDMIPVGQNLKNWNWRLNAIPVTLIQETPHEEKRG</sequence>
<reference key="1">
    <citation type="submission" date="2006-08" db="EMBL/GenBank/DDBJ databases">
        <title>Complete sequence of chromosome 1 of Shewanella sp. MR-7.</title>
        <authorList>
            <person name="Copeland A."/>
            <person name="Lucas S."/>
            <person name="Lapidus A."/>
            <person name="Barry K."/>
            <person name="Detter J.C."/>
            <person name="Glavina del Rio T."/>
            <person name="Hammon N."/>
            <person name="Israni S."/>
            <person name="Dalin E."/>
            <person name="Tice H."/>
            <person name="Pitluck S."/>
            <person name="Kiss H."/>
            <person name="Brettin T."/>
            <person name="Bruce D."/>
            <person name="Han C."/>
            <person name="Tapia R."/>
            <person name="Gilna P."/>
            <person name="Schmutz J."/>
            <person name="Larimer F."/>
            <person name="Land M."/>
            <person name="Hauser L."/>
            <person name="Kyrpides N."/>
            <person name="Mikhailova N."/>
            <person name="Nealson K."/>
            <person name="Konstantinidis K."/>
            <person name="Klappenbach J."/>
            <person name="Tiedje J."/>
            <person name="Richardson P."/>
        </authorList>
    </citation>
    <scope>NUCLEOTIDE SEQUENCE [LARGE SCALE GENOMIC DNA]</scope>
    <source>
        <strain>MR-7</strain>
    </source>
</reference>
<gene>
    <name evidence="1" type="primary">rnfB</name>
    <name type="ordered locus">Shewmr7_1910</name>
</gene>
<comment type="function">
    <text evidence="1">Part of a membrane-bound complex that couples electron transfer with translocation of ions across the membrane.</text>
</comment>
<comment type="cofactor">
    <cofactor evidence="1">
        <name>[4Fe-4S] cluster</name>
        <dbReference type="ChEBI" id="CHEBI:49883"/>
    </cofactor>
    <text evidence="1">Binds 3 [4Fe-4S] clusters.</text>
</comment>
<comment type="subunit">
    <text evidence="1">The complex is composed of six subunits: RnfA, RnfB, RnfC, RnfD, RnfE and RnfG.</text>
</comment>
<comment type="subcellular location">
    <subcellularLocation>
        <location evidence="1">Cell inner membrane</location>
    </subcellularLocation>
</comment>
<comment type="similarity">
    <text evidence="1">Belongs to the 4Fe4S bacterial-type ferredoxin family. RnfB subfamily.</text>
</comment>
<dbReference type="EC" id="7.-.-.-" evidence="1"/>
<dbReference type="EMBL" id="CP000444">
    <property type="protein sequence ID" value="ABI42899.1"/>
    <property type="molecule type" value="Genomic_DNA"/>
</dbReference>
<dbReference type="KEGG" id="shm:Shewmr7_1910"/>
<dbReference type="HOGENOM" id="CLU_063448_2_0_6"/>
<dbReference type="GO" id="GO:0005886">
    <property type="term" value="C:plasma membrane"/>
    <property type="evidence" value="ECO:0007669"/>
    <property type="project" value="UniProtKB-SubCell"/>
</dbReference>
<dbReference type="GO" id="GO:0051539">
    <property type="term" value="F:4 iron, 4 sulfur cluster binding"/>
    <property type="evidence" value="ECO:0007669"/>
    <property type="project" value="UniProtKB-UniRule"/>
</dbReference>
<dbReference type="GO" id="GO:0009055">
    <property type="term" value="F:electron transfer activity"/>
    <property type="evidence" value="ECO:0007669"/>
    <property type="project" value="InterPro"/>
</dbReference>
<dbReference type="GO" id="GO:0046872">
    <property type="term" value="F:metal ion binding"/>
    <property type="evidence" value="ECO:0007669"/>
    <property type="project" value="UniProtKB-KW"/>
</dbReference>
<dbReference type="GO" id="GO:0022900">
    <property type="term" value="P:electron transport chain"/>
    <property type="evidence" value="ECO:0007669"/>
    <property type="project" value="UniProtKB-UniRule"/>
</dbReference>
<dbReference type="FunFam" id="1.10.15.40:FF:000001">
    <property type="entry name" value="Ion-translocating oxidoreductase complex subunit B"/>
    <property type="match status" value="1"/>
</dbReference>
<dbReference type="Gene3D" id="3.30.70.20">
    <property type="match status" value="2"/>
</dbReference>
<dbReference type="Gene3D" id="1.10.15.40">
    <property type="entry name" value="Electron transport complex subunit B, putative Fe-S cluster"/>
    <property type="match status" value="1"/>
</dbReference>
<dbReference type="HAMAP" id="MF_00463">
    <property type="entry name" value="RsxB_RnfB"/>
    <property type="match status" value="1"/>
</dbReference>
<dbReference type="InterPro" id="IPR007202">
    <property type="entry name" value="4Fe-4S_dom"/>
</dbReference>
<dbReference type="InterPro" id="IPR017896">
    <property type="entry name" value="4Fe4S_Fe-S-bd"/>
</dbReference>
<dbReference type="InterPro" id="IPR017900">
    <property type="entry name" value="4Fe4S_Fe_S_CS"/>
</dbReference>
<dbReference type="InterPro" id="IPR010207">
    <property type="entry name" value="Elect_transpt_cplx_RnfB/RsxB"/>
</dbReference>
<dbReference type="InterPro" id="IPR016463">
    <property type="entry name" value="RnfB/RsxB_Proteobac"/>
</dbReference>
<dbReference type="InterPro" id="IPR050294">
    <property type="entry name" value="RnfB_subfamily"/>
</dbReference>
<dbReference type="NCBIfam" id="NF003475">
    <property type="entry name" value="PRK05113.1"/>
    <property type="match status" value="1"/>
</dbReference>
<dbReference type="NCBIfam" id="TIGR01944">
    <property type="entry name" value="rnfB"/>
    <property type="match status" value="1"/>
</dbReference>
<dbReference type="PANTHER" id="PTHR42859:SF3">
    <property type="entry name" value="ION-TRANSLOCATING OXIDOREDUCTASE COMPLEX SUBUNIT B"/>
    <property type="match status" value="1"/>
</dbReference>
<dbReference type="PANTHER" id="PTHR42859">
    <property type="entry name" value="OXIDOREDUCTASE"/>
    <property type="match status" value="1"/>
</dbReference>
<dbReference type="Pfam" id="PF14697">
    <property type="entry name" value="Fer4_21"/>
    <property type="match status" value="1"/>
</dbReference>
<dbReference type="Pfam" id="PF04060">
    <property type="entry name" value="FeS"/>
    <property type="match status" value="1"/>
</dbReference>
<dbReference type="PIRSF" id="PIRSF005784">
    <property type="entry name" value="Elect_transpt_RnfB"/>
    <property type="match status" value="1"/>
</dbReference>
<dbReference type="SUPFAM" id="SSF54862">
    <property type="entry name" value="4Fe-4S ferredoxins"/>
    <property type="match status" value="1"/>
</dbReference>
<dbReference type="PROSITE" id="PS51656">
    <property type="entry name" value="4FE4S"/>
    <property type="match status" value="1"/>
</dbReference>
<dbReference type="PROSITE" id="PS00198">
    <property type="entry name" value="4FE4S_FER_1"/>
    <property type="match status" value="2"/>
</dbReference>
<dbReference type="PROSITE" id="PS51379">
    <property type="entry name" value="4FE4S_FER_2"/>
    <property type="match status" value="2"/>
</dbReference>